<evidence type="ECO:0000250" key="1">
    <source>
        <dbReference type="UniProtKB" id="P68831"/>
    </source>
</evidence>
<evidence type="ECO:0000305" key="2"/>
<evidence type="ECO:0007829" key="3">
    <source>
        <dbReference type="PDB" id="3G80"/>
    </source>
</evidence>
<reference key="1">
    <citation type="journal article" date="2003" name="Virology">
        <title>Recovery of infectivity from cDNA clones of nodamura virus and identification of small nonstructural proteins.</title>
        <authorList>
            <person name="Johnson K.L."/>
            <person name="Price B.D."/>
            <person name="Ball L.A."/>
        </authorList>
    </citation>
    <scope>NUCLEOTIDE SEQUENCE [GENOMIC RNA]</scope>
    <scope>ALTERNATIVE INITIATION</scope>
</reference>
<reference key="2">
    <citation type="journal article" date="2009" name="Biochemistry">
        <title>Structure of the RNA-binding domain of nodamura virus protein B2, a suppressor of RNA interference.</title>
        <authorList>
            <person name="Korber S."/>
            <person name="Shaik Syed Ali P."/>
            <person name="Chen J.C."/>
        </authorList>
    </citation>
    <scope>X-RAY CRYSTALLOGRAPHY (2.5 ANGSTROMS) OF 1-78</scope>
    <scope>FUNCTION</scope>
    <scope>RNA-BINDING</scope>
</reference>
<organism>
    <name type="scientific">Nodamura virus (strain Mag115)</name>
    <name type="common">NoV</name>
    <dbReference type="NCBI Taxonomy" id="914672"/>
    <lineage>
        <taxon>Viruses</taxon>
        <taxon>Riboviria</taxon>
        <taxon>Orthornavirae</taxon>
        <taxon>Kitrinoviricota</taxon>
        <taxon>Magsaviricetes</taxon>
        <taxon>Nodamuvirales</taxon>
        <taxon>Nodaviridae</taxon>
        <taxon>Alphanodavirus</taxon>
        <taxon>Nodamura virus</taxon>
    </lineage>
</organism>
<feature type="chain" id="PRO_0000402409" description="Protein B2">
    <location>
        <begin position="1"/>
        <end position="137"/>
    </location>
</feature>
<feature type="region of interest" description="RNA-binding">
    <location>
        <begin position="1"/>
        <end position="79"/>
    </location>
</feature>
<feature type="splice variant" id="VSP_040284" description="In isoform 2." evidence="2">
    <location>
        <begin position="1"/>
        <end position="3"/>
    </location>
</feature>
<feature type="helix" evidence="3">
    <location>
        <begin position="7"/>
        <end position="12"/>
    </location>
</feature>
<feature type="helix" evidence="3">
    <location>
        <begin position="14"/>
        <end position="30"/>
    </location>
</feature>
<feature type="helix" evidence="3">
    <location>
        <begin position="37"/>
        <end position="65"/>
    </location>
</feature>
<feature type="helix" evidence="3">
    <location>
        <begin position="68"/>
        <end position="74"/>
    </location>
</feature>
<name>B2_NODAM</name>
<sequence>MTNMSCAYELIKSLPAKLEQLAQETQATIQTLMIADPNVNKDLRAFCEFLTVQHQRAYRATNSLLIKPRVAAALRGEELDLGEADVAARVRQLKQQLAELEMEIKPGHQQVAQVSGRRKAAAAAPVAQLGRVGVVNE</sequence>
<proteinExistence type="evidence at protein level"/>
<organismHost>
    <name type="scientific">Aedes</name>
    <dbReference type="NCBI Taxonomy" id="7158"/>
</organismHost>
<organismHost>
    <name type="scientific">Lepidoptera</name>
    <name type="common">butterflies and moths</name>
    <dbReference type="NCBI Taxonomy" id="7088"/>
</organismHost>
<organismHost>
    <name type="scientific">Sus scrofa</name>
    <name type="common">Pig</name>
    <dbReference type="NCBI Taxonomy" id="9823"/>
</organismHost>
<dbReference type="EMBL" id="AF174533">
    <property type="protein sequence ID" value="AAF97861.1"/>
    <property type="molecule type" value="Genomic_RNA"/>
</dbReference>
<dbReference type="RefSeq" id="NP_077731.1">
    <property type="nucleotide sequence ID" value="NC_002690.1"/>
</dbReference>
<dbReference type="PDB" id="3G80">
    <property type="method" value="X-ray"/>
    <property type="resolution" value="2.50 A"/>
    <property type="chains" value="A/B=1-78"/>
</dbReference>
<dbReference type="PDBsum" id="3G80"/>
<dbReference type="SMR" id="Q9IMM3"/>
<dbReference type="KEGG" id="vg:962118"/>
<dbReference type="EvolutionaryTrace" id="Q9IMM3"/>
<dbReference type="Proteomes" id="UP000166289">
    <property type="component" value="Genome"/>
</dbReference>
<dbReference type="GO" id="GO:0033650">
    <property type="term" value="C:host cell mitochondrion"/>
    <property type="evidence" value="ECO:0007669"/>
    <property type="project" value="UniProtKB-SubCell"/>
</dbReference>
<dbReference type="GO" id="GO:0003723">
    <property type="term" value="F:RNA binding"/>
    <property type="evidence" value="ECO:0007669"/>
    <property type="project" value="UniProtKB-KW"/>
</dbReference>
<dbReference type="GO" id="GO:0052170">
    <property type="term" value="P:symbiont-mediated suppression of host innate immune response"/>
    <property type="evidence" value="ECO:0007669"/>
    <property type="project" value="UniProtKB-KW"/>
</dbReference>
<dbReference type="Gene3D" id="1.10.287.1060">
    <property type="entry name" value="ESAT-6-like"/>
    <property type="match status" value="1"/>
</dbReference>
<protein>
    <recommendedName>
        <fullName>Protein B2</fullName>
    </recommendedName>
</protein>
<keyword id="KW-0002">3D-structure</keyword>
<keyword id="KW-0024">Alternative initiation</keyword>
<keyword id="KW-1045">Host mitochondrion</keyword>
<keyword id="KW-0945">Host-virus interaction</keyword>
<keyword id="KW-1090">Inhibition of host innate immune response by virus</keyword>
<keyword id="KW-1185">Reference proteome</keyword>
<keyword id="KW-0694">RNA-binding</keyword>
<keyword id="KW-0941">Suppressor of RNA silencing</keyword>
<keyword id="KW-0899">Viral immunoevasion</keyword>
<accession>Q9IMM3</accession>
<comment type="function">
    <text evidence="1">Binds double-strand RNA (dsRNA) with high affinity. Suppresses the host RNA silencing-based antiviral response.</text>
</comment>
<comment type="subunit">
    <text evidence="1">Homodimer. Interacts with RNA-directed RNA polymerase.</text>
</comment>
<comment type="subcellular location">
    <subcellularLocation>
        <location evidence="1">Host mitochondrion</location>
    </subcellularLocation>
</comment>
<comment type="alternative products">
    <event type="alternative initiation"/>
    <isoform>
        <id>Q9IMM3-1</id>
        <name>1</name>
        <name>B2/137</name>
        <sequence type="displayed"/>
    </isoform>
    <isoform>
        <id>Q9IMM3-2</id>
        <name>2</name>
        <name>B2/134</name>
        <sequence type="described" ref="VSP_040284"/>
    </isoform>
</comment>
<comment type="domain">
    <text evidence="1">The dsRNA-binding region is required for suppression of RNA silencing. The N-terminus is involved in homodimerization. The alpha2 helices of the dimer bind parallel to the stem of the dsRNA helix.</text>
</comment>
<comment type="miscellaneous">
    <text>Encoded on a subgenomic RNA (RNA3) synthesized during replication and which is co-terminal with RNA1.</text>
</comment>
<comment type="miscellaneous">
    <molecule>Isoform 2</molecule>
    <text evidence="2">Produced by alternative initiation at Met-4 of isoform 1.</text>
</comment>
<comment type="similarity">
    <text evidence="2">Belongs to the nodaviridae B2 protein family.</text>
</comment>
<gene>
    <name type="primary">B2</name>
</gene>